<proteinExistence type="inferred from homology"/>
<comment type="function">
    <text evidence="1">Specifically dimethylates two adjacent adenosines in the loop of a conserved hairpin near the 3'-end of 16S rRNA in the 30S particle. May play a critical role in biogenesis of 30S subunits.</text>
</comment>
<comment type="subcellular location">
    <subcellularLocation>
        <location evidence="1">Cytoplasm</location>
    </subcellularLocation>
</comment>
<comment type="similarity">
    <text evidence="1">Belongs to the class I-like SAM-binding methyltransferase superfamily. rRNA adenine N(6)-methyltransferase family. RsmA subfamily.</text>
</comment>
<gene>
    <name evidence="1" type="primary">rsmA</name>
    <name evidence="1" type="synonym">ksgA</name>
    <name type="ordered locus">MTH_1326</name>
</gene>
<keyword id="KW-0963">Cytoplasm</keyword>
<keyword id="KW-0489">Methyltransferase</keyword>
<keyword id="KW-1185">Reference proteome</keyword>
<keyword id="KW-0694">RNA-binding</keyword>
<keyword id="KW-0698">rRNA processing</keyword>
<keyword id="KW-0949">S-adenosyl-L-methionine</keyword>
<keyword id="KW-0808">Transferase</keyword>
<organism>
    <name type="scientific">Methanothermobacter thermautotrophicus (strain ATCC 29096 / DSM 1053 / JCM 10044 / NBRC 100330 / Delta H)</name>
    <name type="common">Methanobacterium thermoautotrophicum</name>
    <dbReference type="NCBI Taxonomy" id="187420"/>
    <lineage>
        <taxon>Archaea</taxon>
        <taxon>Methanobacteriati</taxon>
        <taxon>Methanobacteriota</taxon>
        <taxon>Methanomada group</taxon>
        <taxon>Methanobacteria</taxon>
        <taxon>Methanobacteriales</taxon>
        <taxon>Methanobacteriaceae</taxon>
        <taxon>Methanothermobacter</taxon>
    </lineage>
</organism>
<evidence type="ECO:0000255" key="1">
    <source>
        <dbReference type="HAMAP-Rule" id="MF_00607"/>
    </source>
</evidence>
<reference key="1">
    <citation type="journal article" date="1997" name="J. Bacteriol.">
        <title>Complete genome sequence of Methanobacterium thermoautotrophicum deltaH: functional analysis and comparative genomics.</title>
        <authorList>
            <person name="Smith D.R."/>
            <person name="Doucette-Stamm L.A."/>
            <person name="Deloughery C."/>
            <person name="Lee H.-M."/>
            <person name="Dubois J."/>
            <person name="Aldredge T."/>
            <person name="Bashirzadeh R."/>
            <person name="Blakely D."/>
            <person name="Cook R."/>
            <person name="Gilbert K."/>
            <person name="Harrison D."/>
            <person name="Hoang L."/>
            <person name="Keagle P."/>
            <person name="Lumm W."/>
            <person name="Pothier B."/>
            <person name="Qiu D."/>
            <person name="Spadafora R."/>
            <person name="Vicare R."/>
            <person name="Wang Y."/>
            <person name="Wierzbowski J."/>
            <person name="Gibson R."/>
            <person name="Jiwani N."/>
            <person name="Caruso A."/>
            <person name="Bush D."/>
            <person name="Safer H."/>
            <person name="Patwell D."/>
            <person name="Prabhakar S."/>
            <person name="McDougall S."/>
            <person name="Shimer G."/>
            <person name="Goyal A."/>
            <person name="Pietrovski S."/>
            <person name="Church G.M."/>
            <person name="Daniels C.J."/>
            <person name="Mao J.-I."/>
            <person name="Rice P."/>
            <person name="Noelling J."/>
            <person name="Reeve J.N."/>
        </authorList>
    </citation>
    <scope>NUCLEOTIDE SEQUENCE [LARGE SCALE GENOMIC DNA]</scope>
    <source>
        <strain>ATCC 29096 / DSM 1053 / JCM 10044 / NBRC 100330 / Delta H</strain>
    </source>
</reference>
<accession>O27381</accession>
<dbReference type="EC" id="2.1.1.-" evidence="1"/>
<dbReference type="EMBL" id="AE000666">
    <property type="protein sequence ID" value="AAB85804.1"/>
    <property type="molecule type" value="Genomic_DNA"/>
</dbReference>
<dbReference type="PIR" id="C69043">
    <property type="entry name" value="C69043"/>
</dbReference>
<dbReference type="RefSeq" id="WP_010876939.1">
    <property type="nucleotide sequence ID" value="NC_000916.1"/>
</dbReference>
<dbReference type="SMR" id="O27381"/>
<dbReference type="FunCoup" id="O27381">
    <property type="interactions" value="85"/>
</dbReference>
<dbReference type="STRING" id="187420.MTH_1326"/>
<dbReference type="PaxDb" id="187420-MTH_1326"/>
<dbReference type="EnsemblBacteria" id="AAB85804">
    <property type="protein sequence ID" value="AAB85804"/>
    <property type="gene ID" value="MTH_1326"/>
</dbReference>
<dbReference type="GeneID" id="82297764"/>
<dbReference type="KEGG" id="mth:MTH_1326"/>
<dbReference type="PATRIC" id="fig|187420.15.peg.1295"/>
<dbReference type="HOGENOM" id="CLU_041220_0_2_2"/>
<dbReference type="InParanoid" id="O27381"/>
<dbReference type="Proteomes" id="UP000005223">
    <property type="component" value="Chromosome"/>
</dbReference>
<dbReference type="GO" id="GO:0005737">
    <property type="term" value="C:cytoplasm"/>
    <property type="evidence" value="ECO:0007669"/>
    <property type="project" value="UniProtKB-SubCell"/>
</dbReference>
<dbReference type="GO" id="GO:0003723">
    <property type="term" value="F:RNA binding"/>
    <property type="evidence" value="ECO:0007669"/>
    <property type="project" value="UniProtKB-KW"/>
</dbReference>
<dbReference type="GO" id="GO:0000179">
    <property type="term" value="F:rRNA (adenine-N6,N6-)-dimethyltransferase activity"/>
    <property type="evidence" value="ECO:0007669"/>
    <property type="project" value="InterPro"/>
</dbReference>
<dbReference type="CDD" id="cd02440">
    <property type="entry name" value="AdoMet_MTases"/>
    <property type="match status" value="1"/>
</dbReference>
<dbReference type="FunFam" id="3.40.50.150:FF:000023">
    <property type="entry name" value="Ribosomal RNA small subunit methyltransferase A"/>
    <property type="match status" value="1"/>
</dbReference>
<dbReference type="Gene3D" id="1.10.8.100">
    <property type="entry name" value="Ribosomal RNA adenine dimethylase-like, domain 2"/>
    <property type="match status" value="1"/>
</dbReference>
<dbReference type="Gene3D" id="3.40.50.150">
    <property type="entry name" value="Vaccinia Virus protein VP39"/>
    <property type="match status" value="1"/>
</dbReference>
<dbReference type="HAMAP" id="MF_00607">
    <property type="entry name" value="16SrRNA_methyltr_A"/>
    <property type="match status" value="1"/>
</dbReference>
<dbReference type="InterPro" id="IPR001737">
    <property type="entry name" value="KsgA/Erm"/>
</dbReference>
<dbReference type="InterPro" id="IPR023165">
    <property type="entry name" value="rRNA_Ade_diMease-like_C"/>
</dbReference>
<dbReference type="InterPro" id="IPR020596">
    <property type="entry name" value="rRNA_Ade_Mease_Trfase_CS"/>
</dbReference>
<dbReference type="InterPro" id="IPR020598">
    <property type="entry name" value="rRNA_Ade_methylase_Trfase_N"/>
</dbReference>
<dbReference type="InterPro" id="IPR011530">
    <property type="entry name" value="rRNA_adenine_dimethylase"/>
</dbReference>
<dbReference type="InterPro" id="IPR029063">
    <property type="entry name" value="SAM-dependent_MTases_sf"/>
</dbReference>
<dbReference type="NCBIfam" id="TIGR00755">
    <property type="entry name" value="ksgA"/>
    <property type="match status" value="1"/>
</dbReference>
<dbReference type="PANTHER" id="PTHR11727">
    <property type="entry name" value="DIMETHYLADENOSINE TRANSFERASE"/>
    <property type="match status" value="1"/>
</dbReference>
<dbReference type="PANTHER" id="PTHR11727:SF7">
    <property type="entry name" value="DIMETHYLADENOSINE TRANSFERASE-RELATED"/>
    <property type="match status" value="1"/>
</dbReference>
<dbReference type="Pfam" id="PF00398">
    <property type="entry name" value="RrnaAD"/>
    <property type="match status" value="1"/>
</dbReference>
<dbReference type="SMART" id="SM00650">
    <property type="entry name" value="rADc"/>
    <property type="match status" value="1"/>
</dbReference>
<dbReference type="SUPFAM" id="SSF53335">
    <property type="entry name" value="S-adenosyl-L-methionine-dependent methyltransferases"/>
    <property type="match status" value="1"/>
</dbReference>
<dbReference type="PROSITE" id="PS01131">
    <property type="entry name" value="RRNA_A_DIMETH"/>
    <property type="match status" value="1"/>
</dbReference>
<dbReference type="PROSITE" id="PS51689">
    <property type="entry name" value="SAM_RNA_A_N6_MT"/>
    <property type="match status" value="1"/>
</dbReference>
<feature type="chain" id="PRO_0000101660" description="Probable ribosomal RNA small subunit methyltransferase A">
    <location>
        <begin position="1"/>
        <end position="273"/>
    </location>
</feature>
<feature type="binding site" evidence="1">
    <location>
        <position position="26"/>
    </location>
    <ligand>
        <name>S-adenosyl-L-methionine</name>
        <dbReference type="ChEBI" id="CHEBI:59789"/>
    </ligand>
</feature>
<feature type="binding site" evidence="1">
    <location>
        <position position="28"/>
    </location>
    <ligand>
        <name>S-adenosyl-L-methionine</name>
        <dbReference type="ChEBI" id="CHEBI:59789"/>
    </ligand>
</feature>
<feature type="binding site" evidence="1">
    <location>
        <position position="53"/>
    </location>
    <ligand>
        <name>S-adenosyl-L-methionine</name>
        <dbReference type="ChEBI" id="CHEBI:59789"/>
    </ligand>
</feature>
<feature type="binding site" evidence="1">
    <location>
        <position position="74"/>
    </location>
    <ligand>
        <name>S-adenosyl-L-methionine</name>
        <dbReference type="ChEBI" id="CHEBI:59789"/>
    </ligand>
</feature>
<feature type="binding site" evidence="1">
    <location>
        <position position="98"/>
    </location>
    <ligand>
        <name>S-adenosyl-L-methionine</name>
        <dbReference type="ChEBI" id="CHEBI:59789"/>
    </ligand>
</feature>
<feature type="binding site" evidence="1">
    <location>
        <position position="113"/>
    </location>
    <ligand>
        <name>S-adenosyl-L-methionine</name>
        <dbReference type="ChEBI" id="CHEBI:59789"/>
    </ligand>
</feature>
<protein>
    <recommendedName>
        <fullName evidence="1">Probable ribosomal RNA small subunit methyltransferase A</fullName>
        <ecNumber evidence="1">2.1.1.-</ecNumber>
    </recommendedName>
    <alternativeName>
        <fullName evidence="1">16S rRNA dimethyladenosine transferase</fullName>
    </alternativeName>
    <alternativeName>
        <fullName evidence="1">16S rRNA dimethylase</fullName>
    </alternativeName>
    <alternativeName>
        <fullName evidence="1">S-adenosylmethionine-6-N',N'-adenosyl(rRNA) dimethyltransferase</fullName>
    </alternativeName>
</protein>
<name>RSMA_METTH</name>
<sequence length="273" mass="31344">MSGLYTETREVLRKYGVRLRRSLGQNYLIDEVKRQRILEYADLREDDRVLEIGPGIGTLTLPMAELAGHVTAIESDPLIAAILMDRLQVDNVDVIVGDALRVDFPEFNKVVSNLPYQISSPITFRLLEHDFELAVLMYQKEFARRMVAEPGTREYSRLSVMVHFLAEVEIVDYLKPGCFFPRPRVESAVVTLKPTGFRAPAFLEDVCRALFQHRKKKTSKSLRESFHEIRTDLSFNEVLRGLPPEILEKRVFQLRPEDILEIAEHIEDLSGSS</sequence>